<sequence>MTTARDNSATTLELYRKTLNFNVIGRYDPKIKQLLFHTPHATVYKWEAGENKWNKLEYQGVLAIYLRDVREQAELPVPHQEASAGAEGRCGEVLSGRDIYNYALIVLNRINPENFSIAIAPNSVVNKRRLFSPEENVQQPLEPMDVEVKDELVIIKNLRKEVYGIWIHTPTDRQNIYDLLKYLLENEPKDSFA</sequence>
<evidence type="ECO:0000250" key="1"/>
<evidence type="ECO:0000305" key="2"/>
<dbReference type="EMBL" id="AE016820">
    <property type="protein sequence ID" value="AAS54892.1"/>
    <property type="molecule type" value="Genomic_DNA"/>
</dbReference>
<dbReference type="RefSeq" id="NP_987068.1">
    <property type="nucleotide sequence ID" value="NM_212130.1"/>
</dbReference>
<dbReference type="SMR" id="Q74Z05"/>
<dbReference type="FunCoup" id="Q74Z05">
    <property type="interactions" value="173"/>
</dbReference>
<dbReference type="STRING" id="284811.Q74Z05"/>
<dbReference type="EnsemblFungi" id="AAS54892">
    <property type="protein sequence ID" value="AAS54892"/>
    <property type="gene ID" value="AGOS_AGR402C"/>
</dbReference>
<dbReference type="GeneID" id="4623372"/>
<dbReference type="KEGG" id="ago:AGOS_AGR402C"/>
<dbReference type="eggNOG" id="KOG2868">
    <property type="taxonomic scope" value="Eukaryota"/>
</dbReference>
<dbReference type="HOGENOM" id="CLU_113008_0_0_1"/>
<dbReference type="InParanoid" id="Q74Z05"/>
<dbReference type="OMA" id="IWIHTVA"/>
<dbReference type="OrthoDB" id="440673at2759"/>
<dbReference type="Proteomes" id="UP000000591">
    <property type="component" value="Chromosome VII"/>
</dbReference>
<dbReference type="GO" id="GO:0098562">
    <property type="term" value="C:cytoplasmic side of membrane"/>
    <property type="evidence" value="ECO:0007669"/>
    <property type="project" value="EnsemblFungi"/>
</dbReference>
<dbReference type="GO" id="GO:0005634">
    <property type="term" value="C:nucleus"/>
    <property type="evidence" value="ECO:0007669"/>
    <property type="project" value="EnsemblFungi"/>
</dbReference>
<dbReference type="GO" id="GO:0000932">
    <property type="term" value="C:P-body"/>
    <property type="evidence" value="ECO:0000318"/>
    <property type="project" value="GO_Central"/>
</dbReference>
<dbReference type="GO" id="GO:0098745">
    <property type="term" value="C:RNA decapping complex"/>
    <property type="evidence" value="ECO:0007669"/>
    <property type="project" value="EnsemblFungi"/>
</dbReference>
<dbReference type="GO" id="GO:0008047">
    <property type="term" value="F:enzyme activator activity"/>
    <property type="evidence" value="ECO:0007669"/>
    <property type="project" value="EnsemblFungi"/>
</dbReference>
<dbReference type="GO" id="GO:0003729">
    <property type="term" value="F:mRNA binding"/>
    <property type="evidence" value="ECO:0000318"/>
    <property type="project" value="GO_Central"/>
</dbReference>
<dbReference type="GO" id="GO:0000290">
    <property type="term" value="P:deadenylation-dependent decapping of nuclear-transcribed mRNA"/>
    <property type="evidence" value="ECO:0000318"/>
    <property type="project" value="GO_Central"/>
</dbReference>
<dbReference type="GO" id="GO:0031087">
    <property type="term" value="P:deadenylation-independent decapping of nuclear-transcribed mRNA"/>
    <property type="evidence" value="ECO:0000318"/>
    <property type="project" value="GO_Central"/>
</dbReference>
<dbReference type="GO" id="GO:0006397">
    <property type="term" value="P:mRNA processing"/>
    <property type="evidence" value="ECO:0007669"/>
    <property type="project" value="UniProtKB-KW"/>
</dbReference>
<dbReference type="GO" id="GO:0000184">
    <property type="term" value="P:nuclear-transcribed mRNA catabolic process, nonsense-mediated decay"/>
    <property type="evidence" value="ECO:0007669"/>
    <property type="project" value="UniProtKB-KW"/>
</dbReference>
<dbReference type="CDD" id="cd09804">
    <property type="entry name" value="Dcp1"/>
    <property type="match status" value="1"/>
</dbReference>
<dbReference type="FunFam" id="2.30.29.30:FF:000482">
    <property type="entry name" value="mRNA-decapping enzyme subunit 1"/>
    <property type="match status" value="1"/>
</dbReference>
<dbReference type="Gene3D" id="2.30.29.30">
    <property type="entry name" value="Pleckstrin-homology domain (PH domain)/Phosphotyrosine-binding domain (PTB)"/>
    <property type="match status" value="1"/>
</dbReference>
<dbReference type="InterPro" id="IPR010334">
    <property type="entry name" value="Dcp1"/>
</dbReference>
<dbReference type="InterPro" id="IPR011993">
    <property type="entry name" value="PH-like_dom_sf"/>
</dbReference>
<dbReference type="PANTHER" id="PTHR16290:SF0">
    <property type="entry name" value="DECAPPING PROTEIN 1, ISOFORM A"/>
    <property type="match status" value="1"/>
</dbReference>
<dbReference type="PANTHER" id="PTHR16290">
    <property type="entry name" value="TRANSCRIPTION FACTOR SMIF DECAPPING ENZYME DCP1"/>
    <property type="match status" value="1"/>
</dbReference>
<dbReference type="Pfam" id="PF06058">
    <property type="entry name" value="DCP1"/>
    <property type="match status" value="1"/>
</dbReference>
<dbReference type="SUPFAM" id="SSF50729">
    <property type="entry name" value="PH domain-like"/>
    <property type="match status" value="1"/>
</dbReference>
<reference key="1">
    <citation type="journal article" date="2004" name="Science">
        <title>The Ashbya gossypii genome as a tool for mapping the ancient Saccharomyces cerevisiae genome.</title>
        <authorList>
            <person name="Dietrich F.S."/>
            <person name="Voegeli S."/>
            <person name="Brachat S."/>
            <person name="Lerch A."/>
            <person name="Gates K."/>
            <person name="Steiner S."/>
            <person name="Mohr C."/>
            <person name="Poehlmann R."/>
            <person name="Luedi P."/>
            <person name="Choi S."/>
            <person name="Wing R.A."/>
            <person name="Flavier A."/>
            <person name="Gaffney T.D."/>
            <person name="Philippsen P."/>
        </authorList>
    </citation>
    <scope>NUCLEOTIDE SEQUENCE [LARGE SCALE GENOMIC DNA]</scope>
    <source>
        <strain>ATCC 10895 / CBS 109.51 / FGSC 9923 / NRRL Y-1056</strain>
    </source>
</reference>
<reference key="2">
    <citation type="journal article" date="2013" name="G3 (Bethesda)">
        <title>Genomes of Ashbya fungi isolated from insects reveal four mating-type loci, numerous translocations, lack of transposons, and distinct gene duplications.</title>
        <authorList>
            <person name="Dietrich F.S."/>
            <person name="Voegeli S."/>
            <person name="Kuo S."/>
            <person name="Philippsen P."/>
        </authorList>
    </citation>
    <scope>GENOME REANNOTATION</scope>
    <source>
        <strain>ATCC 10895 / CBS 109.51 / FGSC 9923 / NRRL Y-1056</strain>
    </source>
</reference>
<gene>
    <name type="primary">DCP1</name>
    <name type="ordered locus">AGR402C</name>
</gene>
<name>DCP1_EREGS</name>
<proteinExistence type="inferred from homology"/>
<comment type="function">
    <text evidence="1">Component of the decapping complex necessary for the degradation of mRNAs, both in normal mRNA turnover and in nonsense-mediated mRNA decay. Removes the 7-methyl guanine cap structure from mRNA molecules, yielding a 5'-phosphorylated mRNA fragment and 7m-GDP. Decapping is the major pathway of mRNA degradation in yeast. It occurs through deadenylation, decapping and subsequent 5' to 3' exonucleolytic decay of the transcript body (By similarity).</text>
</comment>
<comment type="subunit">
    <text evidence="1">Component of the decapping complex.</text>
</comment>
<comment type="subcellular location">
    <subcellularLocation>
        <location evidence="1">Cytoplasm</location>
        <location evidence="1">P-body</location>
    </subcellularLocation>
    <text evidence="1">Is concentrated in several cytoplasmic foci called P bodies (or cytoplasmic processing bodies) which represent sites of mRNA decapping and 5' to 3' exonucleotidic decay.</text>
</comment>
<comment type="similarity">
    <text evidence="2">Belongs to the DCP1 family.</text>
</comment>
<protein>
    <recommendedName>
        <fullName>mRNA-decapping enzyme subunit 1</fullName>
    </recommendedName>
</protein>
<feature type="chain" id="PRO_0000232997" description="mRNA-decapping enzyme subunit 1">
    <location>
        <begin position="1"/>
        <end position="193"/>
    </location>
</feature>
<organism>
    <name type="scientific">Eremothecium gossypii (strain ATCC 10895 / CBS 109.51 / FGSC 9923 / NRRL Y-1056)</name>
    <name type="common">Yeast</name>
    <name type="synonym">Ashbya gossypii</name>
    <dbReference type="NCBI Taxonomy" id="284811"/>
    <lineage>
        <taxon>Eukaryota</taxon>
        <taxon>Fungi</taxon>
        <taxon>Dikarya</taxon>
        <taxon>Ascomycota</taxon>
        <taxon>Saccharomycotina</taxon>
        <taxon>Saccharomycetes</taxon>
        <taxon>Saccharomycetales</taxon>
        <taxon>Saccharomycetaceae</taxon>
        <taxon>Eremothecium</taxon>
    </lineage>
</organism>
<keyword id="KW-0963">Cytoplasm</keyword>
<keyword id="KW-0507">mRNA processing</keyword>
<keyword id="KW-0866">Nonsense-mediated mRNA decay</keyword>
<keyword id="KW-1185">Reference proteome</keyword>
<keyword id="KW-0694">RNA-binding</keyword>
<accession>Q74Z05</accession>